<gene>
    <name evidence="1" type="primary">metK</name>
    <name type="ordered locus">LMOf2365_1688</name>
</gene>
<proteinExistence type="inferred from homology"/>
<reference key="1">
    <citation type="journal article" date="2004" name="Nucleic Acids Res.">
        <title>Whole genome comparisons of serotype 4b and 1/2a strains of the food-borne pathogen Listeria monocytogenes reveal new insights into the core genome components of this species.</title>
        <authorList>
            <person name="Nelson K.E."/>
            <person name="Fouts D.E."/>
            <person name="Mongodin E.F."/>
            <person name="Ravel J."/>
            <person name="DeBoy R.T."/>
            <person name="Kolonay J.F."/>
            <person name="Rasko D.A."/>
            <person name="Angiuoli S.V."/>
            <person name="Gill S.R."/>
            <person name="Paulsen I.T."/>
            <person name="Peterson J.D."/>
            <person name="White O."/>
            <person name="Nelson W.C."/>
            <person name="Nierman W.C."/>
            <person name="Beanan M.J."/>
            <person name="Brinkac L.M."/>
            <person name="Daugherty S.C."/>
            <person name="Dodson R.J."/>
            <person name="Durkin A.S."/>
            <person name="Madupu R."/>
            <person name="Haft D.H."/>
            <person name="Selengut J."/>
            <person name="Van Aken S.E."/>
            <person name="Khouri H.M."/>
            <person name="Fedorova N."/>
            <person name="Forberger H.A."/>
            <person name="Tran B."/>
            <person name="Kathariou S."/>
            <person name="Wonderling L.D."/>
            <person name="Uhlich G.A."/>
            <person name="Bayles D.O."/>
            <person name="Luchansky J.B."/>
            <person name="Fraser C.M."/>
        </authorList>
    </citation>
    <scope>NUCLEOTIDE SEQUENCE [LARGE SCALE GENOMIC DNA]</scope>
    <source>
        <strain>F2365</strain>
    </source>
</reference>
<evidence type="ECO:0000255" key="1">
    <source>
        <dbReference type="HAMAP-Rule" id="MF_00086"/>
    </source>
</evidence>
<accession>Q71Z03</accession>
<name>METK_LISMF</name>
<organism>
    <name type="scientific">Listeria monocytogenes serotype 4b (strain F2365)</name>
    <dbReference type="NCBI Taxonomy" id="265669"/>
    <lineage>
        <taxon>Bacteria</taxon>
        <taxon>Bacillati</taxon>
        <taxon>Bacillota</taxon>
        <taxon>Bacilli</taxon>
        <taxon>Bacillales</taxon>
        <taxon>Listeriaceae</taxon>
        <taxon>Listeria</taxon>
    </lineage>
</organism>
<feature type="chain" id="PRO_0000174544" description="S-adenosylmethionine synthase">
    <location>
        <begin position="1"/>
        <end position="399"/>
    </location>
</feature>
<feature type="region of interest" description="Flexible loop" evidence="1">
    <location>
        <begin position="101"/>
        <end position="111"/>
    </location>
</feature>
<feature type="binding site" description="in other chain" evidence="1">
    <location>
        <position position="17"/>
    </location>
    <ligand>
        <name>ATP</name>
        <dbReference type="ChEBI" id="CHEBI:30616"/>
        <note>ligand shared between two neighboring subunits</note>
    </ligand>
</feature>
<feature type="binding site" evidence="1">
    <location>
        <position position="19"/>
    </location>
    <ligand>
        <name>Mg(2+)</name>
        <dbReference type="ChEBI" id="CHEBI:18420"/>
    </ligand>
</feature>
<feature type="binding site" evidence="1">
    <location>
        <position position="45"/>
    </location>
    <ligand>
        <name>K(+)</name>
        <dbReference type="ChEBI" id="CHEBI:29103"/>
    </ligand>
</feature>
<feature type="binding site" description="in other chain" evidence="1">
    <location>
        <position position="58"/>
    </location>
    <ligand>
        <name>L-methionine</name>
        <dbReference type="ChEBI" id="CHEBI:57844"/>
        <note>ligand shared between two neighboring subunits</note>
    </ligand>
</feature>
<feature type="binding site" description="in other chain" evidence="1">
    <location>
        <position position="101"/>
    </location>
    <ligand>
        <name>L-methionine</name>
        <dbReference type="ChEBI" id="CHEBI:57844"/>
        <note>ligand shared between two neighboring subunits</note>
    </ligand>
</feature>
<feature type="binding site" description="in other chain" evidence="1">
    <location>
        <begin position="177"/>
        <end position="179"/>
    </location>
    <ligand>
        <name>ATP</name>
        <dbReference type="ChEBI" id="CHEBI:30616"/>
        <note>ligand shared between two neighboring subunits</note>
    </ligand>
</feature>
<feature type="binding site" description="in other chain" evidence="1">
    <location>
        <begin position="244"/>
        <end position="245"/>
    </location>
    <ligand>
        <name>ATP</name>
        <dbReference type="ChEBI" id="CHEBI:30616"/>
        <note>ligand shared between two neighboring subunits</note>
    </ligand>
</feature>
<feature type="binding site" evidence="1">
    <location>
        <position position="253"/>
    </location>
    <ligand>
        <name>ATP</name>
        <dbReference type="ChEBI" id="CHEBI:30616"/>
        <note>ligand shared between two neighboring subunits</note>
    </ligand>
</feature>
<feature type="binding site" evidence="1">
    <location>
        <position position="253"/>
    </location>
    <ligand>
        <name>L-methionine</name>
        <dbReference type="ChEBI" id="CHEBI:57844"/>
        <note>ligand shared between two neighboring subunits</note>
    </ligand>
</feature>
<feature type="binding site" description="in other chain" evidence="1">
    <location>
        <begin position="259"/>
        <end position="260"/>
    </location>
    <ligand>
        <name>ATP</name>
        <dbReference type="ChEBI" id="CHEBI:30616"/>
        <note>ligand shared between two neighboring subunits</note>
    </ligand>
</feature>
<feature type="binding site" evidence="1">
    <location>
        <position position="276"/>
    </location>
    <ligand>
        <name>ATP</name>
        <dbReference type="ChEBI" id="CHEBI:30616"/>
        <note>ligand shared between two neighboring subunits</note>
    </ligand>
</feature>
<feature type="binding site" evidence="1">
    <location>
        <position position="280"/>
    </location>
    <ligand>
        <name>ATP</name>
        <dbReference type="ChEBI" id="CHEBI:30616"/>
        <note>ligand shared between two neighboring subunits</note>
    </ligand>
</feature>
<feature type="binding site" description="in other chain" evidence="1">
    <location>
        <position position="284"/>
    </location>
    <ligand>
        <name>L-methionine</name>
        <dbReference type="ChEBI" id="CHEBI:57844"/>
        <note>ligand shared between two neighboring subunits</note>
    </ligand>
</feature>
<comment type="function">
    <text evidence="1">Catalyzes the formation of S-adenosylmethionine (AdoMet) from methionine and ATP. The overall synthetic reaction is composed of two sequential steps, AdoMet formation and the subsequent tripolyphosphate hydrolysis which occurs prior to release of AdoMet from the enzyme.</text>
</comment>
<comment type="catalytic activity">
    <reaction evidence="1">
        <text>L-methionine + ATP + H2O = S-adenosyl-L-methionine + phosphate + diphosphate</text>
        <dbReference type="Rhea" id="RHEA:21080"/>
        <dbReference type="ChEBI" id="CHEBI:15377"/>
        <dbReference type="ChEBI" id="CHEBI:30616"/>
        <dbReference type="ChEBI" id="CHEBI:33019"/>
        <dbReference type="ChEBI" id="CHEBI:43474"/>
        <dbReference type="ChEBI" id="CHEBI:57844"/>
        <dbReference type="ChEBI" id="CHEBI:59789"/>
        <dbReference type="EC" id="2.5.1.6"/>
    </reaction>
</comment>
<comment type="cofactor">
    <cofactor evidence="1">
        <name>Mg(2+)</name>
        <dbReference type="ChEBI" id="CHEBI:18420"/>
    </cofactor>
    <text evidence="1">Binds 2 divalent ions per subunit.</text>
</comment>
<comment type="cofactor">
    <cofactor evidence="1">
        <name>K(+)</name>
        <dbReference type="ChEBI" id="CHEBI:29103"/>
    </cofactor>
    <text evidence="1">Binds 1 potassium ion per subunit.</text>
</comment>
<comment type="pathway">
    <text evidence="1">Amino-acid biosynthesis; S-adenosyl-L-methionine biosynthesis; S-adenosyl-L-methionine from L-methionine: step 1/1.</text>
</comment>
<comment type="subunit">
    <text evidence="1">Homotetramer; dimer of dimers.</text>
</comment>
<comment type="subcellular location">
    <subcellularLocation>
        <location evidence="1">Cytoplasm</location>
    </subcellularLocation>
</comment>
<comment type="similarity">
    <text evidence="1">Belongs to the AdoMet synthase family.</text>
</comment>
<protein>
    <recommendedName>
        <fullName evidence="1">S-adenosylmethionine synthase</fullName>
        <shortName evidence="1">AdoMet synthase</shortName>
        <ecNumber evidence="1">2.5.1.6</ecNumber>
    </recommendedName>
    <alternativeName>
        <fullName evidence="1">MAT</fullName>
    </alternativeName>
    <alternativeName>
        <fullName evidence="1">Methionine adenosyltransferase</fullName>
    </alternativeName>
</protein>
<dbReference type="EC" id="2.5.1.6" evidence="1"/>
<dbReference type="EMBL" id="AE017262">
    <property type="protein sequence ID" value="AAT04461.1"/>
    <property type="molecule type" value="Genomic_DNA"/>
</dbReference>
<dbReference type="RefSeq" id="WP_003727328.1">
    <property type="nucleotide sequence ID" value="NC_002973.6"/>
</dbReference>
<dbReference type="SMR" id="Q71Z03"/>
<dbReference type="KEGG" id="lmf:LMOf2365_1688"/>
<dbReference type="HOGENOM" id="CLU_041802_1_1_9"/>
<dbReference type="UniPathway" id="UPA00315">
    <property type="reaction ID" value="UER00080"/>
</dbReference>
<dbReference type="GO" id="GO:0005737">
    <property type="term" value="C:cytoplasm"/>
    <property type="evidence" value="ECO:0007669"/>
    <property type="project" value="UniProtKB-SubCell"/>
</dbReference>
<dbReference type="GO" id="GO:0005524">
    <property type="term" value="F:ATP binding"/>
    <property type="evidence" value="ECO:0007669"/>
    <property type="project" value="UniProtKB-UniRule"/>
</dbReference>
<dbReference type="GO" id="GO:0000287">
    <property type="term" value="F:magnesium ion binding"/>
    <property type="evidence" value="ECO:0007669"/>
    <property type="project" value="UniProtKB-UniRule"/>
</dbReference>
<dbReference type="GO" id="GO:0004478">
    <property type="term" value="F:methionine adenosyltransferase activity"/>
    <property type="evidence" value="ECO:0007669"/>
    <property type="project" value="UniProtKB-UniRule"/>
</dbReference>
<dbReference type="GO" id="GO:0006730">
    <property type="term" value="P:one-carbon metabolic process"/>
    <property type="evidence" value="ECO:0007669"/>
    <property type="project" value="UniProtKB-KW"/>
</dbReference>
<dbReference type="GO" id="GO:0006556">
    <property type="term" value="P:S-adenosylmethionine biosynthetic process"/>
    <property type="evidence" value="ECO:0007669"/>
    <property type="project" value="UniProtKB-UniRule"/>
</dbReference>
<dbReference type="CDD" id="cd18079">
    <property type="entry name" value="S-AdoMet_synt"/>
    <property type="match status" value="1"/>
</dbReference>
<dbReference type="FunFam" id="3.30.300.10:FF:000003">
    <property type="entry name" value="S-adenosylmethionine synthase"/>
    <property type="match status" value="1"/>
</dbReference>
<dbReference type="FunFam" id="3.30.300.10:FF:000004">
    <property type="entry name" value="S-adenosylmethionine synthase"/>
    <property type="match status" value="1"/>
</dbReference>
<dbReference type="Gene3D" id="3.30.300.10">
    <property type="match status" value="3"/>
</dbReference>
<dbReference type="HAMAP" id="MF_00086">
    <property type="entry name" value="S_AdoMet_synth1"/>
    <property type="match status" value="1"/>
</dbReference>
<dbReference type="InterPro" id="IPR022631">
    <property type="entry name" value="ADOMET_SYNTHASE_CS"/>
</dbReference>
<dbReference type="InterPro" id="IPR022630">
    <property type="entry name" value="S-AdoMet_synt_C"/>
</dbReference>
<dbReference type="InterPro" id="IPR022629">
    <property type="entry name" value="S-AdoMet_synt_central"/>
</dbReference>
<dbReference type="InterPro" id="IPR022628">
    <property type="entry name" value="S-AdoMet_synt_N"/>
</dbReference>
<dbReference type="InterPro" id="IPR002133">
    <property type="entry name" value="S-AdoMet_synthetase"/>
</dbReference>
<dbReference type="InterPro" id="IPR022636">
    <property type="entry name" value="S-AdoMet_synthetase_sfam"/>
</dbReference>
<dbReference type="NCBIfam" id="TIGR01034">
    <property type="entry name" value="metK"/>
    <property type="match status" value="1"/>
</dbReference>
<dbReference type="PANTHER" id="PTHR11964">
    <property type="entry name" value="S-ADENOSYLMETHIONINE SYNTHETASE"/>
    <property type="match status" value="1"/>
</dbReference>
<dbReference type="Pfam" id="PF02773">
    <property type="entry name" value="S-AdoMet_synt_C"/>
    <property type="match status" value="1"/>
</dbReference>
<dbReference type="Pfam" id="PF02772">
    <property type="entry name" value="S-AdoMet_synt_M"/>
    <property type="match status" value="1"/>
</dbReference>
<dbReference type="Pfam" id="PF00438">
    <property type="entry name" value="S-AdoMet_synt_N"/>
    <property type="match status" value="1"/>
</dbReference>
<dbReference type="PIRSF" id="PIRSF000497">
    <property type="entry name" value="MAT"/>
    <property type="match status" value="1"/>
</dbReference>
<dbReference type="SUPFAM" id="SSF55973">
    <property type="entry name" value="S-adenosylmethionine synthetase"/>
    <property type="match status" value="3"/>
</dbReference>
<dbReference type="PROSITE" id="PS00376">
    <property type="entry name" value="ADOMET_SYNTHASE_1"/>
    <property type="match status" value="1"/>
</dbReference>
<dbReference type="PROSITE" id="PS00377">
    <property type="entry name" value="ADOMET_SYNTHASE_2"/>
    <property type="match status" value="1"/>
</dbReference>
<sequence>MAKNRHLFTSESVSDGHPDKIADQISDAILDAIISKDPDARVACETTVTTGLVLVAGEITTSVYVDIPKIVRDTIKEIGYTRAKYGFDAETCAVLTAIDEQSPDIAQGVDEALESRSGKEIDAAIEAIGAGDQGLMFGFATDETEELMPLPIFLAHGLARKLTELRKTNKLDYLRPDAKTQVTVEYDEFNQPVRIDTIVVSTQHHPDITQEQIAKDLHTYLFPEVIDASFLDEDTKYFINPTGRFVIGGPLGDAGLTGRKIIVDTYGGYARHGGGAFSGKDPTKVDRSGAYAARYVAKNIVAAGLAKKVEVQVAYAIGVARPVSISIDTYGTSDYSEQELIDGVNELFDLRPAGIIHMLDLRRPIYRQTAAFGHFGRSDLDLPWERTDKAEALKKLIVK</sequence>
<keyword id="KW-0067">ATP-binding</keyword>
<keyword id="KW-0963">Cytoplasm</keyword>
<keyword id="KW-0460">Magnesium</keyword>
<keyword id="KW-0479">Metal-binding</keyword>
<keyword id="KW-0547">Nucleotide-binding</keyword>
<keyword id="KW-0554">One-carbon metabolism</keyword>
<keyword id="KW-0630">Potassium</keyword>
<keyword id="KW-0808">Transferase</keyword>